<comment type="function">
    <text evidence="1">Component of the dark-operative protochlorophyllide reductase (DPOR) that uses Mg-ATP and reduced ferredoxin to reduce ring D of protochlorophyllide (Pchlide) to form chlorophyllide a (Chlide). This reaction is light-independent. The L component serves as a unique electron donor to the NB-component of the complex, and binds Mg-ATP.</text>
</comment>
<comment type="catalytic activity">
    <reaction evidence="1">
        <text>chlorophyllide a + oxidized 2[4Fe-4S]-[ferredoxin] + 2 ADP + 2 phosphate = protochlorophyllide a + reduced 2[4Fe-4S]-[ferredoxin] + 2 ATP + 2 H2O</text>
        <dbReference type="Rhea" id="RHEA:28202"/>
        <dbReference type="Rhea" id="RHEA-COMP:10002"/>
        <dbReference type="Rhea" id="RHEA-COMP:10004"/>
        <dbReference type="ChEBI" id="CHEBI:15377"/>
        <dbReference type="ChEBI" id="CHEBI:30616"/>
        <dbReference type="ChEBI" id="CHEBI:33722"/>
        <dbReference type="ChEBI" id="CHEBI:33723"/>
        <dbReference type="ChEBI" id="CHEBI:43474"/>
        <dbReference type="ChEBI" id="CHEBI:83348"/>
        <dbReference type="ChEBI" id="CHEBI:83350"/>
        <dbReference type="ChEBI" id="CHEBI:456216"/>
        <dbReference type="EC" id="1.3.7.7"/>
    </reaction>
</comment>
<comment type="cofactor">
    <cofactor evidence="1">
        <name>[4Fe-4S] cluster</name>
        <dbReference type="ChEBI" id="CHEBI:49883"/>
    </cofactor>
    <text evidence="1">Binds 1 [4Fe-4S] cluster per dimer.</text>
</comment>
<comment type="pathway">
    <text evidence="1">Porphyrin-containing compound metabolism; chlorophyll biosynthesis (light-independent).</text>
</comment>
<comment type="subunit">
    <text evidence="1">Homodimer. Protochlorophyllide reductase is composed of three subunits; ChlL, ChlN and ChlB.</text>
</comment>
<comment type="subcellular location">
    <subcellularLocation>
        <location>Plastid</location>
        <location>Chloroplast</location>
    </subcellularLocation>
</comment>
<comment type="similarity">
    <text evidence="1">Belongs to the NifH/BchL/ChlL family.</text>
</comment>
<accession>Q20EX9</accession>
<organism>
    <name type="scientific">Oltmannsiellopsis viridis</name>
    <name type="common">Marine flagellate</name>
    <name type="synonym">Oltmannsiella viridis</name>
    <dbReference type="NCBI Taxonomy" id="51324"/>
    <lineage>
        <taxon>Eukaryota</taxon>
        <taxon>Viridiplantae</taxon>
        <taxon>Chlorophyta</taxon>
        <taxon>Ulvophyceae</taxon>
        <taxon>Oltmannsiellopsidales</taxon>
        <taxon>Oltmannsiellopsidaceae</taxon>
        <taxon>Oltmannsiellopsis</taxon>
    </lineage>
</organism>
<name>CHLL_OLTVI</name>
<dbReference type="EC" id="1.3.7.7" evidence="1"/>
<dbReference type="EMBL" id="DQ291132">
    <property type="protein sequence ID" value="ABB81934.1"/>
    <property type="molecule type" value="Genomic_DNA"/>
</dbReference>
<dbReference type="RefSeq" id="YP_635866.1">
    <property type="nucleotide sequence ID" value="NC_008099.1"/>
</dbReference>
<dbReference type="SMR" id="Q20EX9"/>
<dbReference type="GeneID" id="4100113"/>
<dbReference type="UniPathway" id="UPA00670"/>
<dbReference type="GO" id="GO:0009507">
    <property type="term" value="C:chloroplast"/>
    <property type="evidence" value="ECO:0007669"/>
    <property type="project" value="UniProtKB-SubCell"/>
</dbReference>
<dbReference type="GO" id="GO:0051539">
    <property type="term" value="F:4 iron, 4 sulfur cluster binding"/>
    <property type="evidence" value="ECO:0007669"/>
    <property type="project" value="UniProtKB-UniRule"/>
</dbReference>
<dbReference type="GO" id="GO:0005524">
    <property type="term" value="F:ATP binding"/>
    <property type="evidence" value="ECO:0007669"/>
    <property type="project" value="UniProtKB-UniRule"/>
</dbReference>
<dbReference type="GO" id="GO:0046872">
    <property type="term" value="F:metal ion binding"/>
    <property type="evidence" value="ECO:0007669"/>
    <property type="project" value="UniProtKB-KW"/>
</dbReference>
<dbReference type="GO" id="GO:0016730">
    <property type="term" value="F:oxidoreductase activity, acting on iron-sulfur proteins as donors"/>
    <property type="evidence" value="ECO:0007669"/>
    <property type="project" value="InterPro"/>
</dbReference>
<dbReference type="GO" id="GO:0016636">
    <property type="term" value="F:oxidoreductase activity, acting on the CH-CH group of donors, iron-sulfur protein as acceptor"/>
    <property type="evidence" value="ECO:0007669"/>
    <property type="project" value="UniProtKB-UniRule"/>
</dbReference>
<dbReference type="GO" id="GO:0036068">
    <property type="term" value="P:light-independent chlorophyll biosynthetic process"/>
    <property type="evidence" value="ECO:0007669"/>
    <property type="project" value="UniProtKB-UniRule"/>
</dbReference>
<dbReference type="GO" id="GO:0019685">
    <property type="term" value="P:photosynthesis, dark reaction"/>
    <property type="evidence" value="ECO:0007669"/>
    <property type="project" value="InterPro"/>
</dbReference>
<dbReference type="CDD" id="cd02032">
    <property type="entry name" value="Bchl-like"/>
    <property type="match status" value="1"/>
</dbReference>
<dbReference type="Gene3D" id="3.40.50.300">
    <property type="entry name" value="P-loop containing nucleotide triphosphate hydrolases"/>
    <property type="match status" value="1"/>
</dbReference>
<dbReference type="HAMAP" id="MF_00355">
    <property type="entry name" value="ChlL_BchL"/>
    <property type="match status" value="1"/>
</dbReference>
<dbReference type="InterPro" id="IPR030655">
    <property type="entry name" value="NifH/chlL_CS"/>
</dbReference>
<dbReference type="InterPro" id="IPR000392">
    <property type="entry name" value="NifH/frxC"/>
</dbReference>
<dbReference type="InterPro" id="IPR027417">
    <property type="entry name" value="P-loop_NTPase"/>
</dbReference>
<dbReference type="InterPro" id="IPR005971">
    <property type="entry name" value="Protochlorophyllide_ATP-bd"/>
</dbReference>
<dbReference type="NCBIfam" id="TIGR01281">
    <property type="entry name" value="DPOR_bchL"/>
    <property type="match status" value="1"/>
</dbReference>
<dbReference type="PANTHER" id="PTHR42864">
    <property type="entry name" value="LIGHT-INDEPENDENT PROTOCHLOROPHYLLIDE REDUCTASE IRON-SULFUR ATP-BINDING PROTEIN"/>
    <property type="match status" value="1"/>
</dbReference>
<dbReference type="PANTHER" id="PTHR42864:SF2">
    <property type="entry name" value="LIGHT-INDEPENDENT PROTOCHLOROPHYLLIDE REDUCTASE IRON-SULFUR ATP-BINDING PROTEIN"/>
    <property type="match status" value="1"/>
</dbReference>
<dbReference type="Pfam" id="PF00142">
    <property type="entry name" value="Fer4_NifH"/>
    <property type="match status" value="1"/>
</dbReference>
<dbReference type="PIRSF" id="PIRSF000363">
    <property type="entry name" value="Nitrogenase_iron"/>
    <property type="match status" value="1"/>
</dbReference>
<dbReference type="PRINTS" id="PR00091">
    <property type="entry name" value="NITROGNASEII"/>
</dbReference>
<dbReference type="SUPFAM" id="SSF52540">
    <property type="entry name" value="P-loop containing nucleoside triphosphate hydrolases"/>
    <property type="match status" value="1"/>
</dbReference>
<dbReference type="PROSITE" id="PS00746">
    <property type="entry name" value="NIFH_FRXC_1"/>
    <property type="match status" value="1"/>
</dbReference>
<dbReference type="PROSITE" id="PS00692">
    <property type="entry name" value="NIFH_FRXC_2"/>
    <property type="match status" value="1"/>
</dbReference>
<dbReference type="PROSITE" id="PS51026">
    <property type="entry name" value="NIFH_FRXC_3"/>
    <property type="match status" value="1"/>
</dbReference>
<protein>
    <recommendedName>
        <fullName evidence="1">Light-independent protochlorophyllide reductase iron-sulfur ATP-binding protein</fullName>
        <shortName evidence="1">DPOR subunit L</shortName>
        <shortName evidence="1">LI-POR subunit L</shortName>
        <ecNumber evidence="1">1.3.7.7</ecNumber>
    </recommendedName>
</protein>
<reference key="1">
    <citation type="journal article" date="2006" name="BMC Biol.">
        <title>The complete chloroplast DNA sequence of the green alga Oltmannsiellopsis viridis reveals a distinctive quadripartite architecture in the chloroplast genome of early diverging ulvophytes.</title>
        <authorList>
            <person name="Pombert J.-F."/>
            <person name="Lemieux C."/>
            <person name="Turmel M."/>
        </authorList>
    </citation>
    <scope>NUCLEOTIDE SEQUENCE [LARGE SCALE GENOMIC DNA]</scope>
</reference>
<geneLocation type="chloroplast"/>
<gene>
    <name evidence="1" type="primary">chlL</name>
</gene>
<evidence type="ECO:0000255" key="1">
    <source>
        <dbReference type="HAMAP-Rule" id="MF_00355"/>
    </source>
</evidence>
<keyword id="KW-0004">4Fe-4S</keyword>
<keyword id="KW-0067">ATP-binding</keyword>
<keyword id="KW-0149">Chlorophyll biosynthesis</keyword>
<keyword id="KW-0150">Chloroplast</keyword>
<keyword id="KW-0408">Iron</keyword>
<keyword id="KW-0411">Iron-sulfur</keyword>
<keyword id="KW-0460">Magnesium</keyword>
<keyword id="KW-0479">Metal-binding</keyword>
<keyword id="KW-0547">Nucleotide-binding</keyword>
<keyword id="KW-0560">Oxidoreductase</keyword>
<keyword id="KW-0602">Photosynthesis</keyword>
<keyword id="KW-0934">Plastid</keyword>
<proteinExistence type="inferred from homology"/>
<feature type="chain" id="PRO_0000275265" description="Light-independent protochlorophyllide reductase iron-sulfur ATP-binding protein">
    <location>
        <begin position="1"/>
        <end position="311"/>
    </location>
</feature>
<feature type="binding site" evidence="1">
    <location>
        <begin position="10"/>
        <end position="15"/>
    </location>
    <ligand>
        <name>ATP</name>
        <dbReference type="ChEBI" id="CHEBI:30616"/>
    </ligand>
</feature>
<feature type="binding site" evidence="1">
    <location>
        <position position="14"/>
    </location>
    <ligand>
        <name>Mg(2+)</name>
        <dbReference type="ChEBI" id="CHEBI:18420"/>
    </ligand>
</feature>
<feature type="binding site" evidence="1">
    <location>
        <position position="39"/>
    </location>
    <ligand>
        <name>ATP</name>
        <dbReference type="ChEBI" id="CHEBI:30616"/>
    </ligand>
</feature>
<feature type="binding site" evidence="1">
    <location>
        <position position="95"/>
    </location>
    <ligand>
        <name>[4Fe-4S] cluster</name>
        <dbReference type="ChEBI" id="CHEBI:49883"/>
        <note>ligand shared between dimeric partners</note>
    </ligand>
</feature>
<feature type="binding site" evidence="1">
    <location>
        <position position="129"/>
    </location>
    <ligand>
        <name>[4Fe-4S] cluster</name>
        <dbReference type="ChEBI" id="CHEBI:49883"/>
        <note>ligand shared between dimeric partners</note>
    </ligand>
</feature>
<feature type="binding site" evidence="1">
    <location>
        <begin position="180"/>
        <end position="181"/>
    </location>
    <ligand>
        <name>ATP</name>
        <dbReference type="ChEBI" id="CHEBI:30616"/>
    </ligand>
</feature>
<sequence>MKLAVYGKGGIGKSTVSCNLSIALAKRGKKVLQIGCDPKHDSTFTLTGFLIPTIIDTLQSKDYHYEDIWPEDVIYAGYGGVDCVEAGGPPAGAGCGGYVVGETVKLLKELNAFYEYDVILFDVLGDVVCGGFAAPLNYADYCLIVTDNGFDALFAANRIVASVREKARTHPLRLAGLIGNRTATRELIDKYVEVCRMPVLEVLPLIEEIRISRVKGKTIFELEELEPNLKSIGEYYLNIADQLLAQPEGIVPQELADRDLFTLLSSFYLSDQQTEKAYSSIQHVHGSVGEGCSAQNSEQNQTANDYSFEFI</sequence>